<comment type="function">
    <text evidence="1">Plays a role in development of both male and female reproductive tissues.</text>
</comment>
<comment type="subcellular location">
    <subcellularLocation>
        <location evidence="7">Nucleus</location>
    </subcellularLocation>
</comment>
<comment type="tissue specificity">
    <text evidence="4 5">Ubiquitous but expressed mostly in all the aerial organs with highest expression in flowers.</text>
</comment>
<comment type="developmental stage">
    <text evidence="5">Expressed at the late stage of pollen development in tricellular and mature pollen.</text>
</comment>
<comment type="domain">
    <text>The cysteine-rich domain CRC binds zinc in vitro.</text>
</comment>
<comment type="disruption phenotype">
    <text evidence="6">No visible phenotype.</text>
</comment>
<comment type="similarity">
    <text evidence="7">Belongs to the lin-54 family.</text>
</comment>
<comment type="sequence caution" evidence="7">
    <conflict type="erroneous gene model prediction">
        <sequence resource="EMBL-CDS" id="CAB10256"/>
    </conflict>
</comment>
<comment type="sequence caution" evidence="7">
    <conflict type="erroneous gene model prediction">
        <sequence resource="EMBL-CDS" id="CAB78519"/>
    </conflict>
</comment>
<keyword id="KW-0217">Developmental protein</keyword>
<keyword id="KW-0479">Metal-binding</keyword>
<keyword id="KW-0539">Nucleus</keyword>
<keyword id="KW-1185">Reference proteome</keyword>
<keyword id="KW-0862">Zinc</keyword>
<dbReference type="EMBL" id="Z97337">
    <property type="protein sequence ID" value="CAB10256.1"/>
    <property type="status" value="ALT_SEQ"/>
    <property type="molecule type" value="Genomic_DNA"/>
</dbReference>
<dbReference type="EMBL" id="AL161539">
    <property type="protein sequence ID" value="CAB78519.1"/>
    <property type="status" value="ALT_SEQ"/>
    <property type="molecule type" value="Genomic_DNA"/>
</dbReference>
<dbReference type="EMBL" id="CP002687">
    <property type="protein sequence ID" value="AEE83496.1"/>
    <property type="molecule type" value="Genomic_DNA"/>
</dbReference>
<dbReference type="PIR" id="F71410">
    <property type="entry name" value="F71410"/>
</dbReference>
<dbReference type="RefSeq" id="NP_193213.5">
    <property type="nucleotide sequence ID" value="NM_117562.7"/>
</dbReference>
<dbReference type="SMR" id="F4JIF5"/>
<dbReference type="BioGRID" id="12429">
    <property type="interactions" value="5"/>
</dbReference>
<dbReference type="FunCoup" id="F4JIF5">
    <property type="interactions" value="571"/>
</dbReference>
<dbReference type="IntAct" id="F4JIF5">
    <property type="interactions" value="4"/>
</dbReference>
<dbReference type="STRING" id="3702.F4JIF5"/>
<dbReference type="iPTMnet" id="F4JIF5"/>
<dbReference type="PaxDb" id="3702-AT4G14770.1"/>
<dbReference type="ProteomicsDB" id="246411"/>
<dbReference type="EnsemblPlants" id="AT4G14770.1">
    <property type="protein sequence ID" value="AT4G14770.1"/>
    <property type="gene ID" value="AT4G14770"/>
</dbReference>
<dbReference type="GeneID" id="827132"/>
<dbReference type="Gramene" id="AT4G14770.1">
    <property type="protein sequence ID" value="AT4G14770.1"/>
    <property type="gene ID" value="AT4G14770"/>
</dbReference>
<dbReference type="KEGG" id="ath:AT4G14770"/>
<dbReference type="Araport" id="AT4G14770"/>
<dbReference type="TAIR" id="AT4G14770">
    <property type="gene designation" value="TCX2"/>
</dbReference>
<dbReference type="eggNOG" id="KOG1171">
    <property type="taxonomic scope" value="Eukaryota"/>
</dbReference>
<dbReference type="HOGENOM" id="CLU_012297_1_0_1"/>
<dbReference type="InParanoid" id="F4JIF5"/>
<dbReference type="OMA" id="MEQPHIA"/>
<dbReference type="PRO" id="PR:F4JIF5"/>
<dbReference type="Proteomes" id="UP000006548">
    <property type="component" value="Chromosome 4"/>
</dbReference>
<dbReference type="ExpressionAtlas" id="F4JIF5">
    <property type="expression patterns" value="baseline and differential"/>
</dbReference>
<dbReference type="GO" id="GO:0005634">
    <property type="term" value="C:nucleus"/>
    <property type="evidence" value="ECO:0007669"/>
    <property type="project" value="UniProtKB-SubCell"/>
</dbReference>
<dbReference type="GO" id="GO:0003700">
    <property type="term" value="F:DNA-binding transcription factor activity"/>
    <property type="evidence" value="ECO:0000250"/>
    <property type="project" value="TAIR"/>
</dbReference>
<dbReference type="GO" id="GO:0046872">
    <property type="term" value="F:metal ion binding"/>
    <property type="evidence" value="ECO:0007669"/>
    <property type="project" value="UniProtKB-KW"/>
</dbReference>
<dbReference type="GO" id="GO:0000976">
    <property type="term" value="F:transcription cis-regulatory region binding"/>
    <property type="evidence" value="ECO:0000353"/>
    <property type="project" value="TAIR"/>
</dbReference>
<dbReference type="GO" id="GO:0006355">
    <property type="term" value="P:regulation of DNA-templated transcription"/>
    <property type="evidence" value="ECO:0000304"/>
    <property type="project" value="TAIR"/>
</dbReference>
<dbReference type="GO" id="GO:0010375">
    <property type="term" value="P:stomatal complex patterning"/>
    <property type="evidence" value="ECO:0000316"/>
    <property type="project" value="TAIR"/>
</dbReference>
<dbReference type="GO" id="GO:0010440">
    <property type="term" value="P:stomatal lineage progression"/>
    <property type="evidence" value="ECO:0000316"/>
    <property type="project" value="TAIR"/>
</dbReference>
<dbReference type="InterPro" id="IPR005172">
    <property type="entry name" value="CRC"/>
</dbReference>
<dbReference type="InterPro" id="IPR033467">
    <property type="entry name" value="Tesmin/TSO1-like_CXC"/>
</dbReference>
<dbReference type="InterPro" id="IPR044522">
    <property type="entry name" value="TSO1-like"/>
</dbReference>
<dbReference type="PANTHER" id="PTHR46159">
    <property type="entry name" value="PROTEIN TESMIN/TSO1-LIKE CXC 2"/>
    <property type="match status" value="1"/>
</dbReference>
<dbReference type="PANTHER" id="PTHR46159:SF20">
    <property type="entry name" value="PROTEIN TESMIN_TSO1-LIKE CXC 2"/>
    <property type="match status" value="1"/>
</dbReference>
<dbReference type="Pfam" id="PF03638">
    <property type="entry name" value="TCR"/>
    <property type="match status" value="2"/>
</dbReference>
<dbReference type="SMART" id="SM01114">
    <property type="entry name" value="CXC"/>
    <property type="match status" value="2"/>
</dbReference>
<dbReference type="PROSITE" id="PS51634">
    <property type="entry name" value="CRC"/>
    <property type="match status" value="1"/>
</dbReference>
<protein>
    <recommendedName>
        <fullName>Protein tesmin/TSO1-like CXC 2</fullName>
        <shortName>AtTCX2</shortName>
    </recommendedName>
    <alternativeName>
        <fullName>Protein TSO1-like 2</fullName>
        <shortName>Protein SOL2</shortName>
    </alternativeName>
</protein>
<gene>
    <name type="primary">TCX2</name>
    <name type="synonym">SOL2</name>
    <name type="ordered locus">At4g14770</name>
    <name type="ORF">dl3425c</name>
    <name type="ORF">FCAALL.306</name>
</gene>
<accession>F4JIF5</accession>
<accession>O23333</accession>
<sequence>MDTPQKSITQIGTPISKSRFEDSPVFNYINSLSPIRPVRSIPNPNQFSSLNFTSPPSVFTSPHLTSSHKESRFFKTHNSSSSDPTNSVESQEDESTSHEEVPAEGEDTKGLNIDDCMREEASVETNLDDSVASPCGGNTTDLSLVPYAPTRGEDGSCEDNGMELQKMHDNVQGKTETPDWESLIADASELLIFDSPDASEAFRCFMMQRASNSEARFRNGVEKQTMQHDSNKEPESANAIPYEAVSLLHRGIRRRCLDFEMPGNKQTSSENNTAACESSSRCVVPSIGLHLNAILMSSKDCKTNVTQDYSCSANIQVGLQRSISTLQDSLDQTENEIREDADQDVPVEPALQELNLSSPKKKRVKLDSGEGESCKRCNCKKSKCLKLYCECFAAGVYCIEPCSCIDCFNKPIHEDVVLATRKQIESRNPLAFAPKVIRNSDSVQETGDDASKTPASARHKRGCNCKKSNCLKKYCECYQGGVGCSINCRCEGCKNAFGRKDGSSIDMEAEQEEENETSEKSRTAKSQQNTEVLMRKDMSSALPTTPTPIYRPELVQLPFSSSKNRMPPPQSLLGGGSSSGIFNSQYLRKPDISLSQSRIEKSFETVAVDGAEQMPEILIHSPIPNIKSVSPNGKRVSPPHMESSSSGSILGRRNGGRKLILQSIPSFPSLTPQH</sequence>
<proteinExistence type="evidence at protein level"/>
<organism>
    <name type="scientific">Arabidopsis thaliana</name>
    <name type="common">Mouse-ear cress</name>
    <dbReference type="NCBI Taxonomy" id="3702"/>
    <lineage>
        <taxon>Eukaryota</taxon>
        <taxon>Viridiplantae</taxon>
        <taxon>Streptophyta</taxon>
        <taxon>Embryophyta</taxon>
        <taxon>Tracheophyta</taxon>
        <taxon>Spermatophyta</taxon>
        <taxon>Magnoliopsida</taxon>
        <taxon>eudicotyledons</taxon>
        <taxon>Gunneridae</taxon>
        <taxon>Pentapetalae</taxon>
        <taxon>rosids</taxon>
        <taxon>malvids</taxon>
        <taxon>Brassicales</taxon>
        <taxon>Brassicaceae</taxon>
        <taxon>Camelineae</taxon>
        <taxon>Arabidopsis</taxon>
    </lineage>
</organism>
<evidence type="ECO:0000250" key="1"/>
<evidence type="ECO:0000255" key="2">
    <source>
        <dbReference type="PROSITE-ProRule" id="PRU00971"/>
    </source>
</evidence>
<evidence type="ECO:0000256" key="3">
    <source>
        <dbReference type="SAM" id="MobiDB-lite"/>
    </source>
</evidence>
<evidence type="ECO:0000269" key="4">
    <source>
    </source>
</evidence>
<evidence type="ECO:0000269" key="5">
    <source>
    </source>
</evidence>
<evidence type="ECO:0000269" key="6">
    <source>
    </source>
</evidence>
<evidence type="ECO:0000305" key="7"/>
<reference key="1">
    <citation type="journal article" date="1998" name="Nature">
        <title>Analysis of 1.9 Mb of contiguous sequence from chromosome 4 of Arabidopsis thaliana.</title>
        <authorList>
            <person name="Bevan M."/>
            <person name="Bancroft I."/>
            <person name="Bent E."/>
            <person name="Love K."/>
            <person name="Goodman H.M."/>
            <person name="Dean C."/>
            <person name="Bergkamp R."/>
            <person name="Dirkse W."/>
            <person name="van Staveren M."/>
            <person name="Stiekema W."/>
            <person name="Drost L."/>
            <person name="Ridley P."/>
            <person name="Hudson S.-A."/>
            <person name="Patel K."/>
            <person name="Murphy G."/>
            <person name="Piffanelli P."/>
            <person name="Wedler H."/>
            <person name="Wedler E."/>
            <person name="Wambutt R."/>
            <person name="Weitzenegger T."/>
            <person name="Pohl T."/>
            <person name="Terryn N."/>
            <person name="Gielen J."/>
            <person name="Villarroel R."/>
            <person name="De Clercq R."/>
            <person name="van Montagu M."/>
            <person name="Lecharny A."/>
            <person name="Aubourg S."/>
            <person name="Gy I."/>
            <person name="Kreis M."/>
            <person name="Lao N."/>
            <person name="Kavanagh T."/>
            <person name="Hempel S."/>
            <person name="Kotter P."/>
            <person name="Entian K.-D."/>
            <person name="Rieger M."/>
            <person name="Schaefer M."/>
            <person name="Funk B."/>
            <person name="Mueller-Auer S."/>
            <person name="Silvey M."/>
            <person name="James R."/>
            <person name="Monfort A."/>
            <person name="Pons A."/>
            <person name="Puigdomenech P."/>
            <person name="Douka A."/>
            <person name="Voukelatou E."/>
            <person name="Milioni D."/>
            <person name="Hatzopoulos P."/>
            <person name="Piravandi E."/>
            <person name="Obermaier B."/>
            <person name="Hilbert H."/>
            <person name="Duesterhoeft A."/>
            <person name="Moores T."/>
            <person name="Jones J.D.G."/>
            <person name="Eneva T."/>
            <person name="Palme K."/>
            <person name="Benes V."/>
            <person name="Rechmann S."/>
            <person name="Ansorge W."/>
            <person name="Cooke R."/>
            <person name="Berger C."/>
            <person name="Delseny M."/>
            <person name="Voet M."/>
            <person name="Volckaert G."/>
            <person name="Mewes H.-W."/>
            <person name="Klosterman S."/>
            <person name="Schueller C."/>
            <person name="Chalwatzis N."/>
        </authorList>
    </citation>
    <scope>NUCLEOTIDE SEQUENCE [LARGE SCALE GENOMIC DNA]</scope>
    <source>
        <strain>cv. Columbia</strain>
    </source>
</reference>
<reference key="2">
    <citation type="journal article" date="1999" name="Nature">
        <title>Sequence and analysis of chromosome 4 of the plant Arabidopsis thaliana.</title>
        <authorList>
            <person name="Mayer K.F.X."/>
            <person name="Schueller C."/>
            <person name="Wambutt R."/>
            <person name="Murphy G."/>
            <person name="Volckaert G."/>
            <person name="Pohl T."/>
            <person name="Duesterhoeft A."/>
            <person name="Stiekema W."/>
            <person name="Entian K.-D."/>
            <person name="Terryn N."/>
            <person name="Harris B."/>
            <person name="Ansorge W."/>
            <person name="Brandt P."/>
            <person name="Grivell L.A."/>
            <person name="Rieger M."/>
            <person name="Weichselgartner M."/>
            <person name="de Simone V."/>
            <person name="Obermaier B."/>
            <person name="Mache R."/>
            <person name="Mueller M."/>
            <person name="Kreis M."/>
            <person name="Delseny M."/>
            <person name="Puigdomenech P."/>
            <person name="Watson M."/>
            <person name="Schmidtheini T."/>
            <person name="Reichert B."/>
            <person name="Portetelle D."/>
            <person name="Perez-Alonso M."/>
            <person name="Boutry M."/>
            <person name="Bancroft I."/>
            <person name="Vos P."/>
            <person name="Hoheisel J."/>
            <person name="Zimmermann W."/>
            <person name="Wedler H."/>
            <person name="Ridley P."/>
            <person name="Langham S.-A."/>
            <person name="McCullagh B."/>
            <person name="Bilham L."/>
            <person name="Robben J."/>
            <person name="van der Schueren J."/>
            <person name="Grymonprez B."/>
            <person name="Chuang Y.-J."/>
            <person name="Vandenbussche F."/>
            <person name="Braeken M."/>
            <person name="Weltjens I."/>
            <person name="Voet M."/>
            <person name="Bastiaens I."/>
            <person name="Aert R."/>
            <person name="Defoor E."/>
            <person name="Weitzenegger T."/>
            <person name="Bothe G."/>
            <person name="Ramsperger U."/>
            <person name="Hilbert H."/>
            <person name="Braun M."/>
            <person name="Holzer E."/>
            <person name="Brandt A."/>
            <person name="Peters S."/>
            <person name="van Staveren M."/>
            <person name="Dirkse W."/>
            <person name="Mooijman P."/>
            <person name="Klein Lankhorst R."/>
            <person name="Rose M."/>
            <person name="Hauf J."/>
            <person name="Koetter P."/>
            <person name="Berneiser S."/>
            <person name="Hempel S."/>
            <person name="Feldpausch M."/>
            <person name="Lamberth S."/>
            <person name="Van den Daele H."/>
            <person name="De Keyser A."/>
            <person name="Buysshaert C."/>
            <person name="Gielen J."/>
            <person name="Villarroel R."/>
            <person name="De Clercq R."/>
            <person name="van Montagu M."/>
            <person name="Rogers J."/>
            <person name="Cronin A."/>
            <person name="Quail M.A."/>
            <person name="Bray-Allen S."/>
            <person name="Clark L."/>
            <person name="Doggett J."/>
            <person name="Hall S."/>
            <person name="Kay M."/>
            <person name="Lennard N."/>
            <person name="McLay K."/>
            <person name="Mayes R."/>
            <person name="Pettett A."/>
            <person name="Rajandream M.A."/>
            <person name="Lyne M."/>
            <person name="Benes V."/>
            <person name="Rechmann S."/>
            <person name="Borkova D."/>
            <person name="Bloecker H."/>
            <person name="Scharfe M."/>
            <person name="Grimm M."/>
            <person name="Loehnert T.-H."/>
            <person name="Dose S."/>
            <person name="de Haan M."/>
            <person name="Maarse A.C."/>
            <person name="Schaefer M."/>
            <person name="Mueller-Auer S."/>
            <person name="Gabel C."/>
            <person name="Fuchs M."/>
            <person name="Fartmann B."/>
            <person name="Granderath K."/>
            <person name="Dauner D."/>
            <person name="Herzl A."/>
            <person name="Neumann S."/>
            <person name="Argiriou A."/>
            <person name="Vitale D."/>
            <person name="Liguori R."/>
            <person name="Piravandi E."/>
            <person name="Massenet O."/>
            <person name="Quigley F."/>
            <person name="Clabauld G."/>
            <person name="Muendlein A."/>
            <person name="Felber R."/>
            <person name="Schnabl S."/>
            <person name="Hiller R."/>
            <person name="Schmidt W."/>
            <person name="Lecharny A."/>
            <person name="Aubourg S."/>
            <person name="Chefdor F."/>
            <person name="Cooke R."/>
            <person name="Berger C."/>
            <person name="Monfort A."/>
            <person name="Casacuberta E."/>
            <person name="Gibbons T."/>
            <person name="Weber N."/>
            <person name="Vandenbol M."/>
            <person name="Bargues M."/>
            <person name="Terol J."/>
            <person name="Torres A."/>
            <person name="Perez-Perez A."/>
            <person name="Purnelle B."/>
            <person name="Bent E."/>
            <person name="Johnson S."/>
            <person name="Tacon D."/>
            <person name="Jesse T."/>
            <person name="Heijnen L."/>
            <person name="Schwarz S."/>
            <person name="Scholler P."/>
            <person name="Heber S."/>
            <person name="Francs P."/>
            <person name="Bielke C."/>
            <person name="Frishman D."/>
            <person name="Haase D."/>
            <person name="Lemcke K."/>
            <person name="Mewes H.-W."/>
            <person name="Stocker S."/>
            <person name="Zaccaria P."/>
            <person name="Bevan M."/>
            <person name="Wilson R.K."/>
            <person name="de la Bastide M."/>
            <person name="Habermann K."/>
            <person name="Parnell L."/>
            <person name="Dedhia N."/>
            <person name="Gnoj L."/>
            <person name="Schutz K."/>
            <person name="Huang E."/>
            <person name="Spiegel L."/>
            <person name="Sekhon M."/>
            <person name="Murray J."/>
            <person name="Sheet P."/>
            <person name="Cordes M."/>
            <person name="Abu-Threideh J."/>
            <person name="Stoneking T."/>
            <person name="Kalicki J."/>
            <person name="Graves T."/>
            <person name="Harmon G."/>
            <person name="Edwards J."/>
            <person name="Latreille P."/>
            <person name="Courtney L."/>
            <person name="Cloud J."/>
            <person name="Abbott A."/>
            <person name="Scott K."/>
            <person name="Johnson D."/>
            <person name="Minx P."/>
            <person name="Bentley D."/>
            <person name="Fulton B."/>
            <person name="Miller N."/>
            <person name="Greco T."/>
            <person name="Kemp K."/>
            <person name="Kramer J."/>
            <person name="Fulton L."/>
            <person name="Mardis E."/>
            <person name="Dante M."/>
            <person name="Pepin K."/>
            <person name="Hillier L.W."/>
            <person name="Nelson J."/>
            <person name="Spieth J."/>
            <person name="Ryan E."/>
            <person name="Andrews S."/>
            <person name="Geisel C."/>
            <person name="Layman D."/>
            <person name="Du H."/>
            <person name="Ali J."/>
            <person name="Berghoff A."/>
            <person name="Jones K."/>
            <person name="Drone K."/>
            <person name="Cotton M."/>
            <person name="Joshu C."/>
            <person name="Antonoiu B."/>
            <person name="Zidanic M."/>
            <person name="Strong C."/>
            <person name="Sun H."/>
            <person name="Lamar B."/>
            <person name="Yordan C."/>
            <person name="Ma P."/>
            <person name="Zhong J."/>
            <person name="Preston R."/>
            <person name="Vil D."/>
            <person name="Shekher M."/>
            <person name="Matero A."/>
            <person name="Shah R."/>
            <person name="Swaby I.K."/>
            <person name="O'Shaughnessy A."/>
            <person name="Rodriguez M."/>
            <person name="Hoffman J."/>
            <person name="Till S."/>
            <person name="Granat S."/>
            <person name="Shohdy N."/>
            <person name="Hasegawa A."/>
            <person name="Hameed A."/>
            <person name="Lodhi M."/>
            <person name="Johnson A."/>
            <person name="Chen E."/>
            <person name="Marra M.A."/>
            <person name="Martienssen R."/>
            <person name="McCombie W.R."/>
        </authorList>
    </citation>
    <scope>NUCLEOTIDE SEQUENCE [LARGE SCALE GENOMIC DNA]</scope>
    <source>
        <strain>cv. Columbia</strain>
    </source>
</reference>
<reference key="3">
    <citation type="journal article" date="2017" name="Plant J.">
        <title>Araport11: a complete reannotation of the Arabidopsis thaliana reference genome.</title>
        <authorList>
            <person name="Cheng C.Y."/>
            <person name="Krishnakumar V."/>
            <person name="Chan A.P."/>
            <person name="Thibaud-Nissen F."/>
            <person name="Schobel S."/>
            <person name="Town C.D."/>
        </authorList>
    </citation>
    <scope>GENOME REANNOTATION</scope>
    <source>
        <strain>cv. Columbia</strain>
    </source>
</reference>
<reference key="4">
    <citation type="journal article" date="2000" name="Development">
        <title>TSO1 is a novel protein that modulates cytokinesis and cell expansion in Arabidopsis.</title>
        <authorList>
            <person name="Hauser B.A."/>
            <person name="He J.Q."/>
            <person name="Park S.O."/>
            <person name="Gasser C.S."/>
        </authorList>
    </citation>
    <scope>TISSUE SPECIFICITY</scope>
</reference>
<reference key="5">
    <citation type="journal article" date="2007" name="J. Exp. Bot.">
        <title>The conserved cysteine-rich domain of a tesmin/TSO1-like protein binds zinc in vitro and TSO1 is required for both male and female fertility in Arabidopsis thaliana.</title>
        <authorList>
            <person name="Andersen S.U."/>
            <person name="Algreen-Petersen R.G."/>
            <person name="Hoedl M."/>
            <person name="Jurkiewicz A."/>
            <person name="Cvitanich C."/>
            <person name="Braunschweig U."/>
            <person name="Schauser L."/>
            <person name="Oh S.A."/>
            <person name="Twell D."/>
            <person name="Jensen E.O."/>
        </authorList>
    </citation>
    <scope>GENE FAMILY</scope>
    <scope>NOMENCLATURE</scope>
    <scope>ZINC-BINDING</scope>
    <scope>TISSUE SPECIFICITY</scope>
    <scope>DEVELOPMENTAL STAGE</scope>
</reference>
<reference key="6">
    <citation type="journal article" date="2011" name="PLoS Genet.">
        <title>Recessive antimorphic alleles overcome functionally redundant loci to reveal TSO1 function in Arabidopsis flowers and meristems.</title>
        <authorList>
            <person name="Sijacic P."/>
            <person name="Wang W."/>
            <person name="Liu Z."/>
        </authorList>
    </citation>
    <scope>DISRUPTION PHENOTYPE</scope>
</reference>
<feature type="chain" id="PRO_0000418167" description="Protein tesmin/TSO1-like CXC 2">
    <location>
        <begin position="1"/>
        <end position="674"/>
    </location>
</feature>
<feature type="domain" description="CRC" evidence="2">
    <location>
        <begin position="373"/>
        <end position="498"/>
    </location>
</feature>
<feature type="region of interest" description="Disordered" evidence="3">
    <location>
        <begin position="1"/>
        <end position="20"/>
    </location>
</feature>
<feature type="region of interest" description="Disordered" evidence="3">
    <location>
        <begin position="69"/>
        <end position="113"/>
    </location>
</feature>
<feature type="region of interest" description="Disordered" evidence="3">
    <location>
        <begin position="504"/>
        <end position="529"/>
    </location>
</feature>
<feature type="region of interest" description="Disordered" evidence="3">
    <location>
        <begin position="623"/>
        <end position="655"/>
    </location>
</feature>
<feature type="compositionally biased region" description="Polar residues" evidence="3">
    <location>
        <begin position="1"/>
        <end position="16"/>
    </location>
</feature>
<feature type="compositionally biased region" description="Polar residues" evidence="3">
    <location>
        <begin position="76"/>
        <end position="89"/>
    </location>
</feature>
<feature type="compositionally biased region" description="Basic and acidic residues" evidence="3">
    <location>
        <begin position="95"/>
        <end position="109"/>
    </location>
</feature>
<feature type="compositionally biased region" description="Acidic residues" evidence="3">
    <location>
        <begin position="507"/>
        <end position="516"/>
    </location>
</feature>
<name>TCX2_ARATH</name>